<gene>
    <name evidence="2" type="primary">mutM</name>
    <name evidence="2" type="synonym">fpg</name>
    <name type="ordered locus">Pnec_1622</name>
</gene>
<evidence type="ECO:0000250" key="1"/>
<evidence type="ECO:0000255" key="2">
    <source>
        <dbReference type="HAMAP-Rule" id="MF_00103"/>
    </source>
</evidence>
<protein>
    <recommendedName>
        <fullName evidence="2">Formamidopyrimidine-DNA glycosylase</fullName>
        <shortName evidence="2">Fapy-DNA glycosylase</shortName>
        <ecNumber evidence="2">3.2.2.23</ecNumber>
    </recommendedName>
    <alternativeName>
        <fullName evidence="2">DNA-(apurinic or apyrimidinic site) lyase MutM</fullName>
        <shortName evidence="2">AP lyase MutM</shortName>
        <ecNumber evidence="2">4.2.99.18</ecNumber>
    </alternativeName>
</protein>
<comment type="function">
    <text evidence="2">Involved in base excision repair of DNA damaged by oxidation or by mutagenic agents. Acts as a DNA glycosylase that recognizes and removes damaged bases. Has a preference for oxidized purines, such as 7,8-dihydro-8-oxoguanine (8-oxoG). Has AP (apurinic/apyrimidinic) lyase activity and introduces nicks in the DNA strand. Cleaves the DNA backbone by beta-delta elimination to generate a single-strand break at the site of the removed base with both 3'- and 5'-phosphates.</text>
</comment>
<comment type="catalytic activity">
    <reaction evidence="2">
        <text>Hydrolysis of DNA containing ring-opened 7-methylguanine residues, releasing 2,6-diamino-4-hydroxy-5-(N-methyl)formamidopyrimidine.</text>
        <dbReference type="EC" id="3.2.2.23"/>
    </reaction>
</comment>
<comment type="catalytic activity">
    <reaction evidence="2">
        <text>2'-deoxyribonucleotide-(2'-deoxyribose 5'-phosphate)-2'-deoxyribonucleotide-DNA = a 3'-end 2'-deoxyribonucleotide-(2,3-dehydro-2,3-deoxyribose 5'-phosphate)-DNA + a 5'-end 5'-phospho-2'-deoxyribonucleoside-DNA + H(+)</text>
        <dbReference type="Rhea" id="RHEA:66592"/>
        <dbReference type="Rhea" id="RHEA-COMP:13180"/>
        <dbReference type="Rhea" id="RHEA-COMP:16897"/>
        <dbReference type="Rhea" id="RHEA-COMP:17067"/>
        <dbReference type="ChEBI" id="CHEBI:15378"/>
        <dbReference type="ChEBI" id="CHEBI:136412"/>
        <dbReference type="ChEBI" id="CHEBI:157695"/>
        <dbReference type="ChEBI" id="CHEBI:167181"/>
        <dbReference type="EC" id="4.2.99.18"/>
    </reaction>
</comment>
<comment type="cofactor">
    <cofactor evidence="2">
        <name>Zn(2+)</name>
        <dbReference type="ChEBI" id="CHEBI:29105"/>
    </cofactor>
    <text evidence="2">Binds 1 zinc ion per subunit.</text>
</comment>
<comment type="subunit">
    <text evidence="2">Monomer.</text>
</comment>
<comment type="similarity">
    <text evidence="2">Belongs to the FPG family.</text>
</comment>
<proteinExistence type="inferred from homology"/>
<sequence length="278" mass="30659">MPELPEVEVTRLGIAPHLEGRKVSAVKIIDGRLRWPVPANLTKTLPGQTVNGIERRGKYLLLEMDTGYLLIHLGMTGTLRVLPSSDPLKTHDRVTLEFGKLSLRLHDPRKFGAVLWHPKSKGPIKKFILLQKLGVEPFSSEFSGELGAEILYQTSRKRSVAVKQFLLAGQAVVGVGNIYCSESLFEAGIHPAKAAGKLTRPQCSRLAKAVRSILKKAIEAGGSSLKDFVNSDGDPGHFMVQTKVYDRKGLPCKVCKTPISQMVQGQRTTYFCSQCQKR</sequence>
<dbReference type="EC" id="3.2.2.23" evidence="2"/>
<dbReference type="EC" id="4.2.99.18" evidence="2"/>
<dbReference type="EMBL" id="CP001010">
    <property type="protein sequence ID" value="ACB44696.1"/>
    <property type="molecule type" value="Genomic_DNA"/>
</dbReference>
<dbReference type="SMR" id="B1XS61"/>
<dbReference type="STRING" id="452638.Pnec_1622"/>
<dbReference type="KEGG" id="pne:Pnec_1622"/>
<dbReference type="eggNOG" id="COG0266">
    <property type="taxonomic scope" value="Bacteria"/>
</dbReference>
<dbReference type="HOGENOM" id="CLU_038423_1_1_4"/>
<dbReference type="OrthoDB" id="9800855at2"/>
<dbReference type="GO" id="GO:0034039">
    <property type="term" value="F:8-oxo-7,8-dihydroguanine DNA N-glycosylase activity"/>
    <property type="evidence" value="ECO:0007669"/>
    <property type="project" value="TreeGrafter"/>
</dbReference>
<dbReference type="GO" id="GO:0140078">
    <property type="term" value="F:class I DNA-(apurinic or apyrimidinic site) endonuclease activity"/>
    <property type="evidence" value="ECO:0007669"/>
    <property type="project" value="UniProtKB-EC"/>
</dbReference>
<dbReference type="GO" id="GO:0003684">
    <property type="term" value="F:damaged DNA binding"/>
    <property type="evidence" value="ECO:0007669"/>
    <property type="project" value="InterPro"/>
</dbReference>
<dbReference type="GO" id="GO:0008270">
    <property type="term" value="F:zinc ion binding"/>
    <property type="evidence" value="ECO:0007669"/>
    <property type="project" value="UniProtKB-UniRule"/>
</dbReference>
<dbReference type="GO" id="GO:0006284">
    <property type="term" value="P:base-excision repair"/>
    <property type="evidence" value="ECO:0007669"/>
    <property type="project" value="InterPro"/>
</dbReference>
<dbReference type="CDD" id="cd08966">
    <property type="entry name" value="EcFpg-like_N"/>
    <property type="match status" value="1"/>
</dbReference>
<dbReference type="FunFam" id="1.10.8.50:FF:000003">
    <property type="entry name" value="Formamidopyrimidine-DNA glycosylase"/>
    <property type="match status" value="1"/>
</dbReference>
<dbReference type="Gene3D" id="1.10.8.50">
    <property type="match status" value="1"/>
</dbReference>
<dbReference type="Gene3D" id="3.20.190.10">
    <property type="entry name" value="MutM-like, N-terminal"/>
    <property type="match status" value="1"/>
</dbReference>
<dbReference type="HAMAP" id="MF_00103">
    <property type="entry name" value="Fapy_DNA_glycosyl"/>
    <property type="match status" value="1"/>
</dbReference>
<dbReference type="InterPro" id="IPR015886">
    <property type="entry name" value="DNA_glyclase/AP_lyase_DNA-bd"/>
</dbReference>
<dbReference type="InterPro" id="IPR015887">
    <property type="entry name" value="DNA_glyclase_Znf_dom_DNA_BS"/>
</dbReference>
<dbReference type="InterPro" id="IPR020629">
    <property type="entry name" value="Formamido-pyr_DNA_Glyclase"/>
</dbReference>
<dbReference type="InterPro" id="IPR012319">
    <property type="entry name" value="FPG_cat"/>
</dbReference>
<dbReference type="InterPro" id="IPR035937">
    <property type="entry name" value="MutM-like_N-ter"/>
</dbReference>
<dbReference type="InterPro" id="IPR010979">
    <property type="entry name" value="Ribosomal_uS13-like_H2TH"/>
</dbReference>
<dbReference type="InterPro" id="IPR000214">
    <property type="entry name" value="Znf_DNA_glyclase/AP_lyase"/>
</dbReference>
<dbReference type="InterPro" id="IPR010663">
    <property type="entry name" value="Znf_FPG/IleRS"/>
</dbReference>
<dbReference type="NCBIfam" id="TIGR00577">
    <property type="entry name" value="fpg"/>
    <property type="match status" value="1"/>
</dbReference>
<dbReference type="NCBIfam" id="NF002211">
    <property type="entry name" value="PRK01103.1"/>
    <property type="match status" value="1"/>
</dbReference>
<dbReference type="PANTHER" id="PTHR22993">
    <property type="entry name" value="FORMAMIDOPYRIMIDINE-DNA GLYCOSYLASE"/>
    <property type="match status" value="1"/>
</dbReference>
<dbReference type="PANTHER" id="PTHR22993:SF9">
    <property type="entry name" value="FORMAMIDOPYRIMIDINE-DNA GLYCOSYLASE"/>
    <property type="match status" value="1"/>
</dbReference>
<dbReference type="Pfam" id="PF01149">
    <property type="entry name" value="Fapy_DNA_glyco"/>
    <property type="match status" value="1"/>
</dbReference>
<dbReference type="Pfam" id="PF06831">
    <property type="entry name" value="H2TH"/>
    <property type="match status" value="1"/>
</dbReference>
<dbReference type="Pfam" id="PF06827">
    <property type="entry name" value="zf-FPG_IleRS"/>
    <property type="match status" value="1"/>
</dbReference>
<dbReference type="SMART" id="SM00898">
    <property type="entry name" value="Fapy_DNA_glyco"/>
    <property type="match status" value="1"/>
</dbReference>
<dbReference type="SMART" id="SM01232">
    <property type="entry name" value="H2TH"/>
    <property type="match status" value="1"/>
</dbReference>
<dbReference type="SUPFAM" id="SSF57716">
    <property type="entry name" value="Glucocorticoid receptor-like (DNA-binding domain)"/>
    <property type="match status" value="1"/>
</dbReference>
<dbReference type="SUPFAM" id="SSF81624">
    <property type="entry name" value="N-terminal domain of MutM-like DNA repair proteins"/>
    <property type="match status" value="1"/>
</dbReference>
<dbReference type="SUPFAM" id="SSF46946">
    <property type="entry name" value="S13-like H2TH domain"/>
    <property type="match status" value="1"/>
</dbReference>
<dbReference type="PROSITE" id="PS51068">
    <property type="entry name" value="FPG_CAT"/>
    <property type="match status" value="1"/>
</dbReference>
<dbReference type="PROSITE" id="PS01242">
    <property type="entry name" value="ZF_FPG_1"/>
    <property type="match status" value="1"/>
</dbReference>
<dbReference type="PROSITE" id="PS51066">
    <property type="entry name" value="ZF_FPG_2"/>
    <property type="match status" value="1"/>
</dbReference>
<keyword id="KW-0227">DNA damage</keyword>
<keyword id="KW-0234">DNA repair</keyword>
<keyword id="KW-0238">DNA-binding</keyword>
<keyword id="KW-0326">Glycosidase</keyword>
<keyword id="KW-0378">Hydrolase</keyword>
<keyword id="KW-0456">Lyase</keyword>
<keyword id="KW-0479">Metal-binding</keyword>
<keyword id="KW-0511">Multifunctional enzyme</keyword>
<keyword id="KW-0862">Zinc</keyword>
<keyword id="KW-0863">Zinc-finger</keyword>
<organism>
    <name type="scientific">Polynucleobacter necessarius subsp. necessarius (strain STIR1)</name>
    <dbReference type="NCBI Taxonomy" id="452638"/>
    <lineage>
        <taxon>Bacteria</taxon>
        <taxon>Pseudomonadati</taxon>
        <taxon>Pseudomonadota</taxon>
        <taxon>Betaproteobacteria</taxon>
        <taxon>Burkholderiales</taxon>
        <taxon>Burkholderiaceae</taxon>
        <taxon>Polynucleobacter</taxon>
    </lineage>
</organism>
<reference key="1">
    <citation type="journal article" date="2013" name="Proc. Natl. Acad. Sci. U.S.A.">
        <title>Polynucleobacter necessarius, a model for genome reduction in both free-living and symbiotic bacteria.</title>
        <authorList>
            <person name="Boscaro V."/>
            <person name="Felletti M."/>
            <person name="Vannini C."/>
            <person name="Ackerman M.S."/>
            <person name="Chain P.S."/>
            <person name="Malfatti S."/>
            <person name="Vergez L.M."/>
            <person name="Shin M."/>
            <person name="Doak T.G."/>
            <person name="Lynch M."/>
            <person name="Petroni G."/>
        </authorList>
    </citation>
    <scope>NUCLEOTIDE SEQUENCE [LARGE SCALE GENOMIC DNA]</scope>
    <source>
        <strain>STIR1</strain>
    </source>
</reference>
<name>FPG_POLNS</name>
<feature type="initiator methionine" description="Removed" evidence="1">
    <location>
        <position position="1"/>
    </location>
</feature>
<feature type="chain" id="PRO_1000094061" description="Formamidopyrimidine-DNA glycosylase">
    <location>
        <begin position="2"/>
        <end position="278"/>
    </location>
</feature>
<feature type="zinc finger region" description="FPG-type" evidence="2">
    <location>
        <begin position="243"/>
        <end position="277"/>
    </location>
</feature>
<feature type="active site" description="Schiff-base intermediate with DNA" evidence="2">
    <location>
        <position position="2"/>
    </location>
</feature>
<feature type="active site" description="Proton donor" evidence="2">
    <location>
        <position position="3"/>
    </location>
</feature>
<feature type="active site" description="Proton donor; for beta-elimination activity" evidence="2">
    <location>
        <position position="58"/>
    </location>
</feature>
<feature type="active site" description="Proton donor; for delta-elimination activity" evidence="2">
    <location>
        <position position="267"/>
    </location>
</feature>
<feature type="binding site" evidence="2">
    <location>
        <position position="91"/>
    </location>
    <ligand>
        <name>DNA</name>
        <dbReference type="ChEBI" id="CHEBI:16991"/>
    </ligand>
</feature>
<feature type="binding site" evidence="2">
    <location>
        <position position="109"/>
    </location>
    <ligand>
        <name>DNA</name>
        <dbReference type="ChEBI" id="CHEBI:16991"/>
    </ligand>
</feature>
<feature type="binding site" evidence="2">
    <location>
        <position position="158"/>
    </location>
    <ligand>
        <name>DNA</name>
        <dbReference type="ChEBI" id="CHEBI:16991"/>
    </ligand>
</feature>
<accession>B1XS61</accession>